<comment type="function">
    <text evidence="1">3'-to-5' exoribonuclease specific for small oligoribonucleotides.</text>
</comment>
<comment type="subcellular location">
    <subcellularLocation>
        <location evidence="1">Cytoplasm</location>
    </subcellularLocation>
</comment>
<comment type="similarity">
    <text evidence="1">Belongs to the oligoribonuclease family.</text>
</comment>
<sequence length="178" mass="20682">MQSADNLIWIDLEMTGLDVDSCKIIEIAAIITDKDLNIIAEAEPIAIYQPDEVLANMNEWCIKTHTETGLTQRVKDSKISTEAAEQQILEFIRKFVPYQSSPLCGNSIWQDRRFLAKYMPNIDEYCHYRMLDVTTLKLLNQYWGDGKSFEKKNTHKALDDIRESIAELKFYRQKLLSI</sequence>
<dbReference type="EC" id="3.1.15.-" evidence="1"/>
<dbReference type="EMBL" id="CP000608">
    <property type="protein sequence ID" value="ABO47521.1"/>
    <property type="molecule type" value="Genomic_DNA"/>
</dbReference>
<dbReference type="RefSeq" id="WP_003014199.1">
    <property type="nucleotide sequence ID" value="NC_009257.1"/>
</dbReference>
<dbReference type="SMR" id="A4J020"/>
<dbReference type="KEGG" id="ftw:FTW_1861"/>
<dbReference type="HOGENOM" id="CLU_064761_2_0_6"/>
<dbReference type="GO" id="GO:0005737">
    <property type="term" value="C:cytoplasm"/>
    <property type="evidence" value="ECO:0007669"/>
    <property type="project" value="UniProtKB-SubCell"/>
</dbReference>
<dbReference type="GO" id="GO:0000175">
    <property type="term" value="F:3'-5'-RNA exonuclease activity"/>
    <property type="evidence" value="ECO:0007669"/>
    <property type="project" value="InterPro"/>
</dbReference>
<dbReference type="GO" id="GO:0003676">
    <property type="term" value="F:nucleic acid binding"/>
    <property type="evidence" value="ECO:0007669"/>
    <property type="project" value="InterPro"/>
</dbReference>
<dbReference type="GO" id="GO:0006259">
    <property type="term" value="P:DNA metabolic process"/>
    <property type="evidence" value="ECO:0007669"/>
    <property type="project" value="UniProtKB-ARBA"/>
</dbReference>
<dbReference type="CDD" id="cd06135">
    <property type="entry name" value="Orn"/>
    <property type="match status" value="1"/>
</dbReference>
<dbReference type="FunFam" id="3.30.420.10:FF:000003">
    <property type="entry name" value="Oligoribonuclease"/>
    <property type="match status" value="1"/>
</dbReference>
<dbReference type="Gene3D" id="3.30.420.10">
    <property type="entry name" value="Ribonuclease H-like superfamily/Ribonuclease H"/>
    <property type="match status" value="1"/>
</dbReference>
<dbReference type="HAMAP" id="MF_00045">
    <property type="entry name" value="Oligoribonuclease"/>
    <property type="match status" value="1"/>
</dbReference>
<dbReference type="InterPro" id="IPR013520">
    <property type="entry name" value="Exonuclease_RNaseT/DNA_pol3"/>
</dbReference>
<dbReference type="InterPro" id="IPR022894">
    <property type="entry name" value="Oligoribonuclease"/>
</dbReference>
<dbReference type="InterPro" id="IPR012337">
    <property type="entry name" value="RNaseH-like_sf"/>
</dbReference>
<dbReference type="InterPro" id="IPR036397">
    <property type="entry name" value="RNaseH_sf"/>
</dbReference>
<dbReference type="NCBIfam" id="NF003765">
    <property type="entry name" value="PRK05359.1"/>
    <property type="match status" value="1"/>
</dbReference>
<dbReference type="PANTHER" id="PTHR11046">
    <property type="entry name" value="OLIGORIBONUCLEASE, MITOCHONDRIAL"/>
    <property type="match status" value="1"/>
</dbReference>
<dbReference type="PANTHER" id="PTHR11046:SF0">
    <property type="entry name" value="OLIGORIBONUCLEASE, MITOCHONDRIAL"/>
    <property type="match status" value="1"/>
</dbReference>
<dbReference type="Pfam" id="PF00929">
    <property type="entry name" value="RNase_T"/>
    <property type="match status" value="1"/>
</dbReference>
<dbReference type="SMART" id="SM00479">
    <property type="entry name" value="EXOIII"/>
    <property type="match status" value="1"/>
</dbReference>
<dbReference type="SUPFAM" id="SSF53098">
    <property type="entry name" value="Ribonuclease H-like"/>
    <property type="match status" value="1"/>
</dbReference>
<reference key="1">
    <citation type="journal article" date="2007" name="PLoS ONE">
        <title>Complete genomic characterization of a pathogenic A.II strain of Francisella tularensis subspecies tularensis.</title>
        <authorList>
            <person name="Beckstrom-Sternberg S.M."/>
            <person name="Auerbach R.K."/>
            <person name="Godbole S."/>
            <person name="Pearson J.V."/>
            <person name="Beckstrom-Sternberg J.S."/>
            <person name="Deng Z."/>
            <person name="Munk C."/>
            <person name="Kubota K."/>
            <person name="Zhou Y."/>
            <person name="Bruce D."/>
            <person name="Noronha J."/>
            <person name="Scheuermann R.H."/>
            <person name="Wang A."/>
            <person name="Wei X."/>
            <person name="Wang J."/>
            <person name="Hao J."/>
            <person name="Wagner D.M."/>
            <person name="Brettin T.S."/>
            <person name="Brown N."/>
            <person name="Gilna P."/>
            <person name="Keim P.S."/>
        </authorList>
    </citation>
    <scope>NUCLEOTIDE SEQUENCE [LARGE SCALE GENOMIC DNA]</scope>
    <source>
        <strain>WY96-3418</strain>
    </source>
</reference>
<keyword id="KW-0963">Cytoplasm</keyword>
<keyword id="KW-0269">Exonuclease</keyword>
<keyword id="KW-0378">Hydrolase</keyword>
<keyword id="KW-0540">Nuclease</keyword>
<proteinExistence type="inferred from homology"/>
<gene>
    <name evidence="1" type="primary">orn</name>
    <name type="ordered locus">FTW_1861</name>
</gene>
<name>ORN_FRATW</name>
<organism>
    <name type="scientific">Francisella tularensis subsp. tularensis (strain WY96-3418)</name>
    <dbReference type="NCBI Taxonomy" id="418136"/>
    <lineage>
        <taxon>Bacteria</taxon>
        <taxon>Pseudomonadati</taxon>
        <taxon>Pseudomonadota</taxon>
        <taxon>Gammaproteobacteria</taxon>
        <taxon>Thiotrichales</taxon>
        <taxon>Francisellaceae</taxon>
        <taxon>Francisella</taxon>
    </lineage>
</organism>
<protein>
    <recommendedName>
        <fullName evidence="1">Oligoribonuclease</fullName>
        <ecNumber evidence="1">3.1.15.-</ecNumber>
    </recommendedName>
</protein>
<evidence type="ECO:0000255" key="1">
    <source>
        <dbReference type="HAMAP-Rule" id="MF_00045"/>
    </source>
</evidence>
<feature type="chain" id="PRO_1000004252" description="Oligoribonuclease">
    <location>
        <begin position="1"/>
        <end position="178"/>
    </location>
</feature>
<feature type="domain" description="Exonuclease" evidence="1">
    <location>
        <begin position="7"/>
        <end position="168"/>
    </location>
</feature>
<feature type="active site" evidence="1">
    <location>
        <position position="128"/>
    </location>
</feature>
<accession>A4J020</accession>